<feature type="chain" id="PRO_1000073470" description="Protein translocase subunit SecA">
    <location>
        <begin position="1"/>
        <end position="969"/>
    </location>
</feature>
<feature type="binding site" evidence="1">
    <location>
        <position position="99"/>
    </location>
    <ligand>
        <name>ATP</name>
        <dbReference type="ChEBI" id="CHEBI:30616"/>
    </ligand>
</feature>
<feature type="binding site" evidence="1">
    <location>
        <begin position="117"/>
        <end position="121"/>
    </location>
    <ligand>
        <name>ATP</name>
        <dbReference type="ChEBI" id="CHEBI:30616"/>
    </ligand>
</feature>
<feature type="binding site" evidence="1">
    <location>
        <position position="631"/>
    </location>
    <ligand>
        <name>ATP</name>
        <dbReference type="ChEBI" id="CHEBI:30616"/>
    </ligand>
</feature>
<proteinExistence type="inferred from homology"/>
<organism>
    <name type="scientific">Chlamydia felis (strain Fe/C-56)</name>
    <name type="common">Chlamydophila felis</name>
    <dbReference type="NCBI Taxonomy" id="264202"/>
    <lineage>
        <taxon>Bacteria</taxon>
        <taxon>Pseudomonadati</taxon>
        <taxon>Chlamydiota</taxon>
        <taxon>Chlamydiia</taxon>
        <taxon>Chlamydiales</taxon>
        <taxon>Chlamydiaceae</taxon>
        <taxon>Chlamydia/Chlamydophila group</taxon>
        <taxon>Chlamydia</taxon>
    </lineage>
</organism>
<evidence type="ECO:0000255" key="1">
    <source>
        <dbReference type="HAMAP-Rule" id="MF_01382"/>
    </source>
</evidence>
<gene>
    <name evidence="1" type="primary">secA</name>
    <name type="ordered locus">CF0089</name>
</gene>
<accession>Q256C7</accession>
<reference key="1">
    <citation type="journal article" date="2006" name="DNA Res.">
        <title>Genome sequence of the cat pathogen, Chlamydophila felis.</title>
        <authorList>
            <person name="Azuma Y."/>
            <person name="Hirakawa H."/>
            <person name="Yamashita A."/>
            <person name="Cai Y."/>
            <person name="Rahman M.A."/>
            <person name="Suzuki H."/>
            <person name="Mitaku S."/>
            <person name="Toh H."/>
            <person name="Goto S."/>
            <person name="Murakami T."/>
            <person name="Sugi K."/>
            <person name="Hayashi H."/>
            <person name="Fukushi H."/>
            <person name="Hattori M."/>
            <person name="Kuhara S."/>
            <person name="Shirai M."/>
        </authorList>
    </citation>
    <scope>NUCLEOTIDE SEQUENCE [LARGE SCALE GENOMIC DNA]</scope>
    <source>
        <strain>Fe/C-56</strain>
    </source>
</reference>
<protein>
    <recommendedName>
        <fullName evidence="1">Protein translocase subunit SecA</fullName>
        <ecNumber evidence="1">7.4.2.8</ecNumber>
    </recommendedName>
</protein>
<name>SECA_CHLFF</name>
<comment type="function">
    <text evidence="1">Part of the Sec protein translocase complex. Interacts with the SecYEG preprotein conducting channel. Has a central role in coupling the hydrolysis of ATP to the transfer of proteins into and across the cell membrane, serving as an ATP-driven molecular motor driving the stepwise translocation of polypeptide chains across the membrane.</text>
</comment>
<comment type="catalytic activity">
    <reaction evidence="1">
        <text>ATP + H2O + cellular proteinSide 1 = ADP + phosphate + cellular proteinSide 2.</text>
        <dbReference type="EC" id="7.4.2.8"/>
    </reaction>
</comment>
<comment type="subunit">
    <text evidence="1">Monomer and homodimer. Part of the essential Sec protein translocation apparatus which comprises SecA, SecYEG and auxiliary proteins SecDF. Other proteins may also be involved.</text>
</comment>
<comment type="subcellular location">
    <subcellularLocation>
        <location evidence="1">Cell inner membrane</location>
        <topology evidence="1">Peripheral membrane protein</topology>
        <orientation evidence="1">Cytoplasmic side</orientation>
    </subcellularLocation>
    <subcellularLocation>
        <location evidence="1">Cytoplasm</location>
    </subcellularLocation>
    <text evidence="1">Distribution is 50-50.</text>
</comment>
<comment type="similarity">
    <text evidence="1">Belongs to the SecA family.</text>
</comment>
<sequence length="969" mass="111009">MLDFLKRFFGSSQERTLKKFQKLVDKVNLYDEMLAPLSDEELRNKTGELKKRYQEGESLDDMLPEAYAVVKNVCRRLTGTPVEVSGYHQNWDMVPYDVQVLGAIAMHKGFITEMQTGEGKTLTAVMPLYLNALTGKPVHLVTVNDYLAQRDCEWVGSILRWLGLTTGVLISGSPLEKRKEIYRCDVVYGTASEFGFDYLRDNSIATSVDEQVGRGFYFAIIDEVDSILIDEARTPLIISGPGEKHNPVYFELKDKVAELVQLQRELCNQLALEARRGLEHFLDMDILPKDKKVIEGISEFCRSLWLVSKGMPLNRVLRRVREHPDLRAMIDKWDTYYHAEQNKEESIEKLSQLYIIVDEHNNDFELTDRGMQQWVEKAGGSAEDFVMIDMGHEYALIDSDESLSPTDKINRKIAVSEEDTQRKARAHGLRQLLRAHLLMERDVDYIVRNDQIVIIDEHTGRPQPGRRFSEGLHQAIESKEHVTIRKESQTFATITLQNFFRLYEKLAGMTGTAITESKEFKEIYNLYVLQVPTFKTCLRIDHNDEFYMTEREKYHAIVNEIARIHKDGNPILIGTESVEVSEKLSRILKQNRIEHTVLNAKNHAQEAEIIAAAGKLGAVTVATNMAGRGTDIKLDEEAVVVGGLHVIGTSRHQSRRIDRQLRGRCARLGDPGAAKFFLSFEDRLMRLFASPKLNALIRHFRPPEGEAMSDPMFNKLIETAQKRVEARNYTIRKHTLEYDDVMNKQRQTIYAFRNEVLRSEDIFALAKESINHVALMIASLIMSREHPAGHSLPILEEWMNYSFPLQLNIEELRRLPSLDAIAEKVADELTGAFQNKFSSMVEEITAAAGNDVDANGICKDIIRSVMIMHIDEQWKIHLVDMDLLRSEVGLRTVGQKDPLLEFKHESFLLFESLIRDIRIAIVKHLFRLELTMTREQRPQNVIPVVATSFQNDENFGPMELTIISDSDDE</sequence>
<keyword id="KW-0067">ATP-binding</keyword>
<keyword id="KW-0997">Cell inner membrane</keyword>
<keyword id="KW-1003">Cell membrane</keyword>
<keyword id="KW-0963">Cytoplasm</keyword>
<keyword id="KW-0472">Membrane</keyword>
<keyword id="KW-0547">Nucleotide-binding</keyword>
<keyword id="KW-0653">Protein transport</keyword>
<keyword id="KW-1278">Translocase</keyword>
<keyword id="KW-0811">Translocation</keyword>
<keyword id="KW-0813">Transport</keyword>
<dbReference type="EC" id="7.4.2.8" evidence="1"/>
<dbReference type="EMBL" id="AP006861">
    <property type="protein sequence ID" value="BAE80861.1"/>
    <property type="molecule type" value="Genomic_DNA"/>
</dbReference>
<dbReference type="RefSeq" id="WP_011457646.1">
    <property type="nucleotide sequence ID" value="NC_007899.1"/>
</dbReference>
<dbReference type="SMR" id="Q256C7"/>
<dbReference type="STRING" id="264202.CF0089"/>
<dbReference type="KEGG" id="cfe:CF0089"/>
<dbReference type="eggNOG" id="COG0653">
    <property type="taxonomic scope" value="Bacteria"/>
</dbReference>
<dbReference type="HOGENOM" id="CLU_005314_3_0_0"/>
<dbReference type="OrthoDB" id="9805579at2"/>
<dbReference type="Proteomes" id="UP000001260">
    <property type="component" value="Chromosome"/>
</dbReference>
<dbReference type="GO" id="GO:0031522">
    <property type="term" value="C:cell envelope Sec protein transport complex"/>
    <property type="evidence" value="ECO:0007669"/>
    <property type="project" value="TreeGrafter"/>
</dbReference>
<dbReference type="GO" id="GO:0005829">
    <property type="term" value="C:cytosol"/>
    <property type="evidence" value="ECO:0007669"/>
    <property type="project" value="TreeGrafter"/>
</dbReference>
<dbReference type="GO" id="GO:0005886">
    <property type="term" value="C:plasma membrane"/>
    <property type="evidence" value="ECO:0007669"/>
    <property type="project" value="UniProtKB-SubCell"/>
</dbReference>
<dbReference type="GO" id="GO:0005524">
    <property type="term" value="F:ATP binding"/>
    <property type="evidence" value="ECO:0007669"/>
    <property type="project" value="UniProtKB-UniRule"/>
</dbReference>
<dbReference type="GO" id="GO:0008564">
    <property type="term" value="F:protein-exporting ATPase activity"/>
    <property type="evidence" value="ECO:0007669"/>
    <property type="project" value="UniProtKB-EC"/>
</dbReference>
<dbReference type="GO" id="GO:0065002">
    <property type="term" value="P:intracellular protein transmembrane transport"/>
    <property type="evidence" value="ECO:0007669"/>
    <property type="project" value="UniProtKB-UniRule"/>
</dbReference>
<dbReference type="GO" id="GO:0017038">
    <property type="term" value="P:protein import"/>
    <property type="evidence" value="ECO:0007669"/>
    <property type="project" value="InterPro"/>
</dbReference>
<dbReference type="GO" id="GO:0006605">
    <property type="term" value="P:protein targeting"/>
    <property type="evidence" value="ECO:0007669"/>
    <property type="project" value="UniProtKB-UniRule"/>
</dbReference>
<dbReference type="GO" id="GO:0043952">
    <property type="term" value="P:protein transport by the Sec complex"/>
    <property type="evidence" value="ECO:0007669"/>
    <property type="project" value="TreeGrafter"/>
</dbReference>
<dbReference type="CDD" id="cd17928">
    <property type="entry name" value="DEXDc_SecA"/>
    <property type="match status" value="1"/>
</dbReference>
<dbReference type="CDD" id="cd18803">
    <property type="entry name" value="SF2_C_secA"/>
    <property type="match status" value="1"/>
</dbReference>
<dbReference type="FunFam" id="3.40.50.300:FF:000429">
    <property type="entry name" value="Preprotein translocase subunit SecA"/>
    <property type="match status" value="1"/>
</dbReference>
<dbReference type="FunFam" id="3.40.50.300:FF:000787">
    <property type="entry name" value="Protein translocase subunit SecA"/>
    <property type="match status" value="1"/>
</dbReference>
<dbReference type="Gene3D" id="1.10.3060.10">
    <property type="entry name" value="Helical scaffold and wing domains of SecA"/>
    <property type="match status" value="1"/>
</dbReference>
<dbReference type="Gene3D" id="3.40.50.300">
    <property type="entry name" value="P-loop containing nucleotide triphosphate hydrolases"/>
    <property type="match status" value="3"/>
</dbReference>
<dbReference type="Gene3D" id="3.90.1440.10">
    <property type="entry name" value="SecA, preprotein cross-linking domain"/>
    <property type="match status" value="1"/>
</dbReference>
<dbReference type="HAMAP" id="MF_01382">
    <property type="entry name" value="SecA"/>
    <property type="match status" value="1"/>
</dbReference>
<dbReference type="InterPro" id="IPR014001">
    <property type="entry name" value="Helicase_ATP-bd"/>
</dbReference>
<dbReference type="InterPro" id="IPR001650">
    <property type="entry name" value="Helicase_C-like"/>
</dbReference>
<dbReference type="InterPro" id="IPR027417">
    <property type="entry name" value="P-loop_NTPase"/>
</dbReference>
<dbReference type="InterPro" id="IPR000185">
    <property type="entry name" value="SecA"/>
</dbReference>
<dbReference type="InterPro" id="IPR020937">
    <property type="entry name" value="SecA_CS"/>
</dbReference>
<dbReference type="InterPro" id="IPR011115">
    <property type="entry name" value="SecA_DEAD"/>
</dbReference>
<dbReference type="InterPro" id="IPR014018">
    <property type="entry name" value="SecA_motor_DEAD"/>
</dbReference>
<dbReference type="InterPro" id="IPR011130">
    <property type="entry name" value="SecA_preprotein_X-link_dom"/>
</dbReference>
<dbReference type="InterPro" id="IPR044722">
    <property type="entry name" value="SecA_SF2_C"/>
</dbReference>
<dbReference type="InterPro" id="IPR011116">
    <property type="entry name" value="SecA_Wing/Scaffold"/>
</dbReference>
<dbReference type="InterPro" id="IPR036266">
    <property type="entry name" value="SecA_Wing/Scaffold_sf"/>
</dbReference>
<dbReference type="InterPro" id="IPR036670">
    <property type="entry name" value="SecA_X-link_sf"/>
</dbReference>
<dbReference type="NCBIfam" id="TIGR00963">
    <property type="entry name" value="secA"/>
    <property type="match status" value="1"/>
</dbReference>
<dbReference type="PANTHER" id="PTHR30612:SF0">
    <property type="entry name" value="CHLOROPLAST PROTEIN-TRANSPORTING ATPASE"/>
    <property type="match status" value="1"/>
</dbReference>
<dbReference type="PANTHER" id="PTHR30612">
    <property type="entry name" value="SECA INNER MEMBRANE COMPONENT OF SEC PROTEIN SECRETION SYSTEM"/>
    <property type="match status" value="1"/>
</dbReference>
<dbReference type="Pfam" id="PF21090">
    <property type="entry name" value="P-loop_SecA"/>
    <property type="match status" value="1"/>
</dbReference>
<dbReference type="Pfam" id="PF07517">
    <property type="entry name" value="SecA_DEAD"/>
    <property type="match status" value="1"/>
</dbReference>
<dbReference type="Pfam" id="PF01043">
    <property type="entry name" value="SecA_PP_bind"/>
    <property type="match status" value="1"/>
</dbReference>
<dbReference type="Pfam" id="PF07516">
    <property type="entry name" value="SecA_SW"/>
    <property type="match status" value="1"/>
</dbReference>
<dbReference type="PRINTS" id="PR00906">
    <property type="entry name" value="SECA"/>
</dbReference>
<dbReference type="SMART" id="SM00957">
    <property type="entry name" value="SecA_DEAD"/>
    <property type="match status" value="1"/>
</dbReference>
<dbReference type="SMART" id="SM00958">
    <property type="entry name" value="SecA_PP_bind"/>
    <property type="match status" value="1"/>
</dbReference>
<dbReference type="SUPFAM" id="SSF81886">
    <property type="entry name" value="Helical scaffold and wing domains of SecA"/>
    <property type="match status" value="1"/>
</dbReference>
<dbReference type="SUPFAM" id="SSF52540">
    <property type="entry name" value="P-loop containing nucleoside triphosphate hydrolases"/>
    <property type="match status" value="2"/>
</dbReference>
<dbReference type="SUPFAM" id="SSF81767">
    <property type="entry name" value="Pre-protein crosslinking domain of SecA"/>
    <property type="match status" value="1"/>
</dbReference>
<dbReference type="PROSITE" id="PS01312">
    <property type="entry name" value="SECA"/>
    <property type="match status" value="1"/>
</dbReference>
<dbReference type="PROSITE" id="PS51196">
    <property type="entry name" value="SECA_MOTOR_DEAD"/>
    <property type="match status" value="1"/>
</dbReference>